<name>HIS3_VEREI</name>
<organism>
    <name type="scientific">Verminephrobacter eiseniae (strain EF01-2)</name>
    <dbReference type="NCBI Taxonomy" id="391735"/>
    <lineage>
        <taxon>Bacteria</taxon>
        <taxon>Pseudomonadati</taxon>
        <taxon>Pseudomonadota</taxon>
        <taxon>Betaproteobacteria</taxon>
        <taxon>Burkholderiales</taxon>
        <taxon>Comamonadaceae</taxon>
        <taxon>Verminephrobacter</taxon>
    </lineage>
</organism>
<feature type="chain" id="PRO_0000319722" description="Phosphoribosyl-AMP cyclohydrolase">
    <location>
        <begin position="1"/>
        <end position="129"/>
    </location>
</feature>
<feature type="binding site" evidence="1">
    <location>
        <position position="76"/>
    </location>
    <ligand>
        <name>Mg(2+)</name>
        <dbReference type="ChEBI" id="CHEBI:18420"/>
    </ligand>
</feature>
<feature type="binding site" evidence="1">
    <location>
        <position position="77"/>
    </location>
    <ligand>
        <name>Zn(2+)</name>
        <dbReference type="ChEBI" id="CHEBI:29105"/>
        <note>ligand shared between dimeric partners</note>
    </ligand>
</feature>
<feature type="binding site" evidence="1">
    <location>
        <position position="78"/>
    </location>
    <ligand>
        <name>Mg(2+)</name>
        <dbReference type="ChEBI" id="CHEBI:18420"/>
    </ligand>
</feature>
<feature type="binding site" evidence="1">
    <location>
        <position position="80"/>
    </location>
    <ligand>
        <name>Mg(2+)</name>
        <dbReference type="ChEBI" id="CHEBI:18420"/>
    </ligand>
</feature>
<feature type="binding site" evidence="1">
    <location>
        <position position="97"/>
    </location>
    <ligand>
        <name>Zn(2+)</name>
        <dbReference type="ChEBI" id="CHEBI:29105"/>
        <note>ligand shared between dimeric partners</note>
    </ligand>
</feature>
<feature type="binding site" evidence="1">
    <location>
        <position position="104"/>
    </location>
    <ligand>
        <name>Zn(2+)</name>
        <dbReference type="ChEBI" id="CHEBI:29105"/>
        <note>ligand shared between dimeric partners</note>
    </ligand>
</feature>
<sequence length="129" mass="14461">MDWLDDVKWDAQGLVPVIAQEQGTGDVLMLAWMNREALRQTAALGRAVYFSRSRGKLWFKGEDSGHAQTVHEIRLDCDRDVLLLRVTQQGHQPGIACHTGRHSCFFSRLGDGAWQAVDAVLKDPRAIYG</sequence>
<accession>A1WFT0</accession>
<keyword id="KW-0028">Amino-acid biosynthesis</keyword>
<keyword id="KW-0963">Cytoplasm</keyword>
<keyword id="KW-0368">Histidine biosynthesis</keyword>
<keyword id="KW-0378">Hydrolase</keyword>
<keyword id="KW-0460">Magnesium</keyword>
<keyword id="KW-0479">Metal-binding</keyword>
<keyword id="KW-1185">Reference proteome</keyword>
<keyword id="KW-0862">Zinc</keyword>
<protein>
    <recommendedName>
        <fullName evidence="1">Phosphoribosyl-AMP cyclohydrolase</fullName>
        <shortName evidence="1">PRA-CH</shortName>
        <ecNumber evidence="1">3.5.4.19</ecNumber>
    </recommendedName>
</protein>
<comment type="function">
    <text evidence="1">Catalyzes the hydrolysis of the adenine ring of phosphoribosyl-AMP.</text>
</comment>
<comment type="catalytic activity">
    <reaction evidence="1">
        <text>1-(5-phospho-beta-D-ribosyl)-5'-AMP + H2O = 1-(5-phospho-beta-D-ribosyl)-5-[(5-phospho-beta-D-ribosylamino)methylideneamino]imidazole-4-carboxamide</text>
        <dbReference type="Rhea" id="RHEA:20049"/>
        <dbReference type="ChEBI" id="CHEBI:15377"/>
        <dbReference type="ChEBI" id="CHEBI:58435"/>
        <dbReference type="ChEBI" id="CHEBI:59457"/>
        <dbReference type="EC" id="3.5.4.19"/>
    </reaction>
</comment>
<comment type="cofactor">
    <cofactor evidence="1">
        <name>Mg(2+)</name>
        <dbReference type="ChEBI" id="CHEBI:18420"/>
    </cofactor>
    <text evidence="1">Binds 1 Mg(2+) ion per subunit.</text>
</comment>
<comment type="cofactor">
    <cofactor evidence="1">
        <name>Zn(2+)</name>
        <dbReference type="ChEBI" id="CHEBI:29105"/>
    </cofactor>
    <text evidence="1">Binds 1 zinc ion per subunit.</text>
</comment>
<comment type="pathway">
    <text evidence="1">Amino-acid biosynthesis; L-histidine biosynthesis; L-histidine from 5-phospho-alpha-D-ribose 1-diphosphate: step 3/9.</text>
</comment>
<comment type="subunit">
    <text evidence="1">Homodimer.</text>
</comment>
<comment type="subcellular location">
    <subcellularLocation>
        <location evidence="1">Cytoplasm</location>
    </subcellularLocation>
</comment>
<comment type="similarity">
    <text evidence="1">Belongs to the PRA-CH family.</text>
</comment>
<comment type="sequence caution" evidence="2">
    <conflict type="erroneous initiation">
        <sequence resource="EMBL-CDS" id="ABM56487"/>
    </conflict>
</comment>
<proteinExistence type="inferred from homology"/>
<gene>
    <name evidence="1" type="primary">hisI</name>
    <name type="ordered locus">Veis_0705</name>
</gene>
<reference key="1">
    <citation type="submission" date="2006-12" db="EMBL/GenBank/DDBJ databases">
        <title>Complete sequence of chromosome 1 of Verminephrobacter eiseniae EF01-2.</title>
        <authorList>
            <person name="Copeland A."/>
            <person name="Lucas S."/>
            <person name="Lapidus A."/>
            <person name="Barry K."/>
            <person name="Detter J.C."/>
            <person name="Glavina del Rio T."/>
            <person name="Dalin E."/>
            <person name="Tice H."/>
            <person name="Pitluck S."/>
            <person name="Chertkov O."/>
            <person name="Brettin T."/>
            <person name="Bruce D."/>
            <person name="Han C."/>
            <person name="Tapia R."/>
            <person name="Gilna P."/>
            <person name="Schmutz J."/>
            <person name="Larimer F."/>
            <person name="Land M."/>
            <person name="Hauser L."/>
            <person name="Kyrpides N."/>
            <person name="Kim E."/>
            <person name="Stahl D."/>
            <person name="Richardson P."/>
        </authorList>
    </citation>
    <scope>NUCLEOTIDE SEQUENCE [LARGE SCALE GENOMIC DNA]</scope>
    <source>
        <strain>EF01-2</strain>
    </source>
</reference>
<dbReference type="EC" id="3.5.4.19" evidence="1"/>
<dbReference type="EMBL" id="CP000542">
    <property type="protein sequence ID" value="ABM56487.1"/>
    <property type="status" value="ALT_INIT"/>
    <property type="molecule type" value="Genomic_DNA"/>
</dbReference>
<dbReference type="SMR" id="A1WFT0"/>
<dbReference type="STRING" id="391735.Veis_0705"/>
<dbReference type="KEGG" id="vei:Veis_0705"/>
<dbReference type="eggNOG" id="COG0139">
    <property type="taxonomic scope" value="Bacteria"/>
</dbReference>
<dbReference type="HOGENOM" id="CLU_048577_5_0_4"/>
<dbReference type="OrthoDB" id="9795769at2"/>
<dbReference type="UniPathway" id="UPA00031">
    <property type="reaction ID" value="UER00008"/>
</dbReference>
<dbReference type="Proteomes" id="UP000000374">
    <property type="component" value="Chromosome"/>
</dbReference>
<dbReference type="GO" id="GO:0005737">
    <property type="term" value="C:cytoplasm"/>
    <property type="evidence" value="ECO:0007669"/>
    <property type="project" value="UniProtKB-SubCell"/>
</dbReference>
<dbReference type="GO" id="GO:0000287">
    <property type="term" value="F:magnesium ion binding"/>
    <property type="evidence" value="ECO:0007669"/>
    <property type="project" value="UniProtKB-UniRule"/>
</dbReference>
<dbReference type="GO" id="GO:0004635">
    <property type="term" value="F:phosphoribosyl-AMP cyclohydrolase activity"/>
    <property type="evidence" value="ECO:0007669"/>
    <property type="project" value="UniProtKB-UniRule"/>
</dbReference>
<dbReference type="GO" id="GO:0008270">
    <property type="term" value="F:zinc ion binding"/>
    <property type="evidence" value="ECO:0007669"/>
    <property type="project" value="UniProtKB-UniRule"/>
</dbReference>
<dbReference type="GO" id="GO:0000105">
    <property type="term" value="P:L-histidine biosynthetic process"/>
    <property type="evidence" value="ECO:0007669"/>
    <property type="project" value="UniProtKB-UniRule"/>
</dbReference>
<dbReference type="FunFam" id="3.10.20.810:FF:000001">
    <property type="entry name" value="Histidine biosynthesis bifunctional protein HisIE"/>
    <property type="match status" value="1"/>
</dbReference>
<dbReference type="Gene3D" id="3.10.20.810">
    <property type="entry name" value="Phosphoribosyl-AMP cyclohydrolase"/>
    <property type="match status" value="1"/>
</dbReference>
<dbReference type="HAMAP" id="MF_01021">
    <property type="entry name" value="HisI"/>
    <property type="match status" value="1"/>
</dbReference>
<dbReference type="InterPro" id="IPR026660">
    <property type="entry name" value="PRA-CH"/>
</dbReference>
<dbReference type="InterPro" id="IPR002496">
    <property type="entry name" value="PRib_AMP_CycHydrolase_dom"/>
</dbReference>
<dbReference type="InterPro" id="IPR038019">
    <property type="entry name" value="PRib_AMP_CycHydrolase_sf"/>
</dbReference>
<dbReference type="NCBIfam" id="NF000768">
    <property type="entry name" value="PRK00051.1"/>
    <property type="match status" value="1"/>
</dbReference>
<dbReference type="PANTHER" id="PTHR42945">
    <property type="entry name" value="HISTIDINE BIOSYNTHESIS BIFUNCTIONAL PROTEIN"/>
    <property type="match status" value="1"/>
</dbReference>
<dbReference type="PANTHER" id="PTHR42945:SF1">
    <property type="entry name" value="HISTIDINE BIOSYNTHESIS BIFUNCTIONAL PROTEIN HIS7"/>
    <property type="match status" value="1"/>
</dbReference>
<dbReference type="Pfam" id="PF01502">
    <property type="entry name" value="PRA-CH"/>
    <property type="match status" value="1"/>
</dbReference>
<dbReference type="SUPFAM" id="SSF141734">
    <property type="entry name" value="HisI-like"/>
    <property type="match status" value="1"/>
</dbReference>
<evidence type="ECO:0000255" key="1">
    <source>
        <dbReference type="HAMAP-Rule" id="MF_01021"/>
    </source>
</evidence>
<evidence type="ECO:0000305" key="2"/>